<reference key="1">
    <citation type="journal article" date="2009" name="Proc. Natl. Acad. Sci. U.S.A.">
        <title>Biogeography of the Sulfolobus islandicus pan-genome.</title>
        <authorList>
            <person name="Reno M.L."/>
            <person name="Held N.L."/>
            <person name="Fields C.J."/>
            <person name="Burke P.V."/>
            <person name="Whitaker R.J."/>
        </authorList>
    </citation>
    <scope>NUCLEOTIDE SEQUENCE [LARGE SCALE GENOMIC DNA]</scope>
    <source>
        <strain>L.S.2.15 / Lassen #1</strain>
    </source>
</reference>
<organism>
    <name type="scientific">Saccharolobus islandicus (strain L.S.2.15 / Lassen #1)</name>
    <name type="common">Sulfolobus islandicus</name>
    <dbReference type="NCBI Taxonomy" id="429572"/>
    <lineage>
        <taxon>Archaea</taxon>
        <taxon>Thermoproteota</taxon>
        <taxon>Thermoprotei</taxon>
        <taxon>Sulfolobales</taxon>
        <taxon>Sulfolobaceae</taxon>
        <taxon>Saccharolobus</taxon>
    </lineage>
</organism>
<accession>C3MQ47</accession>
<comment type="function">
    <text evidence="1">Non-catalytic component of the exosome, which is a complex involved in RNA degradation. Contributes to the structuring of the Rrp41 active site.</text>
</comment>
<comment type="subunit">
    <text evidence="1">Component of the archaeal exosome complex. Forms a hexameric ring-like arrangement composed of 3 Rrp41-Rrp42 heterodimers. The hexameric ring associates with a trimer of Rrp4 and/or Csl4 subunits.</text>
</comment>
<comment type="subcellular location">
    <subcellularLocation>
        <location evidence="1">Cytoplasm</location>
    </subcellularLocation>
</comment>
<comment type="similarity">
    <text evidence="1">Belongs to the RNase PH family. Rrp42 subfamily.</text>
</comment>
<feature type="chain" id="PRO_1000212291" description="Exosome complex component Rrp42">
    <location>
        <begin position="1"/>
        <end position="275"/>
    </location>
</feature>
<dbReference type="EMBL" id="CP001399">
    <property type="protein sequence ID" value="ACP35510.1"/>
    <property type="molecule type" value="Genomic_DNA"/>
</dbReference>
<dbReference type="RefSeq" id="WP_012713728.1">
    <property type="nucleotide sequence ID" value="NC_012589.1"/>
</dbReference>
<dbReference type="SMR" id="C3MQ47"/>
<dbReference type="GeneID" id="84061727"/>
<dbReference type="KEGG" id="sis:LS215_1502"/>
<dbReference type="HOGENOM" id="CLU_038194_0_0_2"/>
<dbReference type="OrthoDB" id="30932at2157"/>
<dbReference type="Proteomes" id="UP000001747">
    <property type="component" value="Chromosome"/>
</dbReference>
<dbReference type="GO" id="GO:0000177">
    <property type="term" value="C:cytoplasmic exosome (RNase complex)"/>
    <property type="evidence" value="ECO:0007669"/>
    <property type="project" value="TreeGrafter"/>
</dbReference>
<dbReference type="GO" id="GO:0035925">
    <property type="term" value="F:mRNA 3'-UTR AU-rich region binding"/>
    <property type="evidence" value="ECO:0007669"/>
    <property type="project" value="TreeGrafter"/>
</dbReference>
<dbReference type="GO" id="GO:0016075">
    <property type="term" value="P:rRNA catabolic process"/>
    <property type="evidence" value="ECO:0007669"/>
    <property type="project" value="TreeGrafter"/>
</dbReference>
<dbReference type="CDD" id="cd11365">
    <property type="entry name" value="RNase_PH_archRRP42"/>
    <property type="match status" value="1"/>
</dbReference>
<dbReference type="FunFam" id="3.30.230.70:FF:000017">
    <property type="entry name" value="Exosome complex component Rrp42"/>
    <property type="match status" value="1"/>
</dbReference>
<dbReference type="Gene3D" id="3.30.230.70">
    <property type="entry name" value="GHMP Kinase, N-terminal domain"/>
    <property type="match status" value="1"/>
</dbReference>
<dbReference type="HAMAP" id="MF_00622">
    <property type="entry name" value="Exosome_Rrp42"/>
    <property type="match status" value="1"/>
</dbReference>
<dbReference type="InterPro" id="IPR001247">
    <property type="entry name" value="ExoRNase_PH_dom1"/>
</dbReference>
<dbReference type="InterPro" id="IPR015847">
    <property type="entry name" value="ExoRNase_PH_dom2"/>
</dbReference>
<dbReference type="InterPro" id="IPR036345">
    <property type="entry name" value="ExoRNase_PH_dom2_sf"/>
</dbReference>
<dbReference type="InterPro" id="IPR050590">
    <property type="entry name" value="Exosome_comp_Rrp42_subfam"/>
</dbReference>
<dbReference type="InterPro" id="IPR027408">
    <property type="entry name" value="PNPase/RNase_PH_dom_sf"/>
</dbReference>
<dbReference type="InterPro" id="IPR020568">
    <property type="entry name" value="Ribosomal_Su5_D2-typ_SF"/>
</dbReference>
<dbReference type="InterPro" id="IPR020869">
    <property type="entry name" value="Rrp42_archaea"/>
</dbReference>
<dbReference type="NCBIfam" id="NF003282">
    <property type="entry name" value="PRK04282.1-1"/>
    <property type="match status" value="1"/>
</dbReference>
<dbReference type="PANTHER" id="PTHR11097:SF8">
    <property type="entry name" value="EXOSOME COMPLEX COMPONENT RRP42"/>
    <property type="match status" value="1"/>
</dbReference>
<dbReference type="PANTHER" id="PTHR11097">
    <property type="entry name" value="EXOSOME COMPLEX EXONUCLEASE RIBOSOMAL RNA PROCESSING PROTEIN"/>
    <property type="match status" value="1"/>
</dbReference>
<dbReference type="Pfam" id="PF01138">
    <property type="entry name" value="RNase_PH"/>
    <property type="match status" value="1"/>
</dbReference>
<dbReference type="Pfam" id="PF03725">
    <property type="entry name" value="RNase_PH_C"/>
    <property type="match status" value="1"/>
</dbReference>
<dbReference type="SUPFAM" id="SSF55666">
    <property type="entry name" value="Ribonuclease PH domain 2-like"/>
    <property type="match status" value="1"/>
</dbReference>
<dbReference type="SUPFAM" id="SSF54211">
    <property type="entry name" value="Ribosomal protein S5 domain 2-like"/>
    <property type="match status" value="1"/>
</dbReference>
<keyword id="KW-0963">Cytoplasm</keyword>
<keyword id="KW-0271">Exosome</keyword>
<sequence>MSSTPSNQNIIPLIKKESIVSLFEKGTRQDGRKLTDYRPLSITLDYAKKADGSALVKLGTTMVLAGTKLEIDKPYEDTPNQGNLIVNVELLPLAYETFEPGPPDENAIELARVVDRSLRDSKALDLTKLVIEPGKSVWTVWLDVYVLDYGGNVLDACTLASVAALYNTKVYKVEQDSNGFRVNKNEVVGKLPLNHPVVTVSIAKVDKYLIVDPDLDEESIMDTKVSFSYTPDLKIVGIQKSGKGSMSLQDIDQAENTARLVAVKLLEELKKQLGI</sequence>
<protein>
    <recommendedName>
        <fullName evidence="1">Exosome complex component Rrp42</fullName>
    </recommendedName>
</protein>
<name>RRP42_SACI2</name>
<gene>
    <name evidence="1" type="primary">rrp42</name>
    <name type="ordered locus">LS215_1502</name>
</gene>
<evidence type="ECO:0000255" key="1">
    <source>
        <dbReference type="HAMAP-Rule" id="MF_00622"/>
    </source>
</evidence>
<proteinExistence type="inferred from homology"/>